<dbReference type="EC" id="2.7.11.1" evidence="7"/>
<dbReference type="EC" id="2.7.11.26" evidence="2"/>
<dbReference type="EMBL" id="AY926534">
    <property type="protein sequence ID" value="AAX22002.1"/>
    <property type="molecule type" value="mRNA"/>
</dbReference>
<dbReference type="EMBL" id="AY926535">
    <property type="protein sequence ID" value="AAX22003.1"/>
    <property type="molecule type" value="mRNA"/>
</dbReference>
<dbReference type="EMBL" id="BC044700">
    <property type="protein sequence ID" value="AAH44700.1"/>
    <property type="molecule type" value="mRNA"/>
</dbReference>
<dbReference type="RefSeq" id="NP_001080669.1">
    <property type="nucleotide sequence ID" value="NM_001087200.1"/>
</dbReference>
<dbReference type="RefSeq" id="XP_018096015.1">
    <molecule id="Q5BP74-2"/>
    <property type="nucleotide sequence ID" value="XM_018240526.1"/>
</dbReference>
<dbReference type="SMR" id="Q5BP74"/>
<dbReference type="DNASU" id="380361"/>
<dbReference type="GeneID" id="380361"/>
<dbReference type="KEGG" id="xla:380361"/>
<dbReference type="AGR" id="Xenbase:XB-GENE-5734033"/>
<dbReference type="CTD" id="380361"/>
<dbReference type="Xenbase" id="XB-GENE-5734033">
    <property type="gene designation" value="csnk1d.S"/>
</dbReference>
<dbReference type="OrthoDB" id="5800476at2759"/>
<dbReference type="Proteomes" id="UP000186698">
    <property type="component" value="Chromosome 9_10S"/>
</dbReference>
<dbReference type="Bgee" id="380361">
    <property type="expression patterns" value="Expressed in testis and 19 other cell types or tissues"/>
</dbReference>
<dbReference type="GO" id="GO:0005737">
    <property type="term" value="C:cytoplasm"/>
    <property type="evidence" value="ECO:0000314"/>
    <property type="project" value="UniProtKB"/>
</dbReference>
<dbReference type="GO" id="GO:0005634">
    <property type="term" value="C:nucleus"/>
    <property type="evidence" value="ECO:0000314"/>
    <property type="project" value="UniProtKB"/>
</dbReference>
<dbReference type="GO" id="GO:0005876">
    <property type="term" value="C:spindle microtubule"/>
    <property type="evidence" value="ECO:0000318"/>
    <property type="project" value="GO_Central"/>
</dbReference>
<dbReference type="GO" id="GO:0005524">
    <property type="term" value="F:ATP binding"/>
    <property type="evidence" value="ECO:0007669"/>
    <property type="project" value="UniProtKB-KW"/>
</dbReference>
<dbReference type="GO" id="GO:0004672">
    <property type="term" value="F:protein kinase activity"/>
    <property type="evidence" value="ECO:0000314"/>
    <property type="project" value="UniProtKB"/>
</dbReference>
<dbReference type="GO" id="GO:0106310">
    <property type="term" value="F:protein serine kinase activity"/>
    <property type="evidence" value="ECO:0007669"/>
    <property type="project" value="RHEA"/>
</dbReference>
<dbReference type="GO" id="GO:0004674">
    <property type="term" value="F:protein serine/threonine kinase activity"/>
    <property type="evidence" value="ECO:0000318"/>
    <property type="project" value="GO_Central"/>
</dbReference>
<dbReference type="GO" id="GO:0006897">
    <property type="term" value="P:endocytosis"/>
    <property type="evidence" value="ECO:0000318"/>
    <property type="project" value="GO_Central"/>
</dbReference>
<dbReference type="GO" id="GO:1905515">
    <property type="term" value="P:non-motile cilium assembly"/>
    <property type="evidence" value="ECO:0000318"/>
    <property type="project" value="GO_Central"/>
</dbReference>
<dbReference type="GO" id="GO:0090263">
    <property type="term" value="P:positive regulation of canonical Wnt signaling pathway"/>
    <property type="evidence" value="ECO:0000318"/>
    <property type="project" value="GO_Central"/>
</dbReference>
<dbReference type="GO" id="GO:0032436">
    <property type="term" value="P:positive regulation of proteasomal ubiquitin-dependent protein catabolic process"/>
    <property type="evidence" value="ECO:0000318"/>
    <property type="project" value="GO_Central"/>
</dbReference>
<dbReference type="GO" id="GO:0042752">
    <property type="term" value="P:regulation of circadian rhythm"/>
    <property type="evidence" value="ECO:0000318"/>
    <property type="project" value="GO_Central"/>
</dbReference>
<dbReference type="GO" id="GO:0007165">
    <property type="term" value="P:signal transduction"/>
    <property type="evidence" value="ECO:0000318"/>
    <property type="project" value="GO_Central"/>
</dbReference>
<dbReference type="GO" id="GO:0051225">
    <property type="term" value="P:spindle assembly"/>
    <property type="evidence" value="ECO:0000318"/>
    <property type="project" value="GO_Central"/>
</dbReference>
<dbReference type="GO" id="GO:0016055">
    <property type="term" value="P:Wnt signaling pathway"/>
    <property type="evidence" value="ECO:0007669"/>
    <property type="project" value="UniProtKB-KW"/>
</dbReference>
<dbReference type="CDD" id="cd14125">
    <property type="entry name" value="STKc_CK1_delta_epsilon"/>
    <property type="match status" value="1"/>
</dbReference>
<dbReference type="FunFam" id="1.10.510.10:FF:000194">
    <property type="entry name" value="Casein kinase I isoform delta"/>
    <property type="match status" value="1"/>
</dbReference>
<dbReference type="FunFam" id="3.30.200.20:FF:000538">
    <property type="entry name" value="Putative Casein kinase I"/>
    <property type="match status" value="1"/>
</dbReference>
<dbReference type="Gene3D" id="1.10.510.10">
    <property type="entry name" value="Transferase(Phosphotransferase) domain 1"/>
    <property type="match status" value="1"/>
</dbReference>
<dbReference type="InterPro" id="IPR050235">
    <property type="entry name" value="CK1_Ser-Thr_kinase"/>
</dbReference>
<dbReference type="InterPro" id="IPR011009">
    <property type="entry name" value="Kinase-like_dom_sf"/>
</dbReference>
<dbReference type="InterPro" id="IPR000719">
    <property type="entry name" value="Prot_kinase_dom"/>
</dbReference>
<dbReference type="InterPro" id="IPR017441">
    <property type="entry name" value="Protein_kinase_ATP_BS"/>
</dbReference>
<dbReference type="InterPro" id="IPR008271">
    <property type="entry name" value="Ser/Thr_kinase_AS"/>
</dbReference>
<dbReference type="PANTHER" id="PTHR11909">
    <property type="entry name" value="CASEIN KINASE-RELATED"/>
    <property type="match status" value="1"/>
</dbReference>
<dbReference type="Pfam" id="PF00069">
    <property type="entry name" value="Pkinase"/>
    <property type="match status" value="1"/>
</dbReference>
<dbReference type="SMART" id="SM00220">
    <property type="entry name" value="S_TKc"/>
    <property type="match status" value="1"/>
</dbReference>
<dbReference type="SUPFAM" id="SSF56112">
    <property type="entry name" value="Protein kinase-like (PK-like)"/>
    <property type="match status" value="1"/>
</dbReference>
<dbReference type="PROSITE" id="PS00107">
    <property type="entry name" value="PROTEIN_KINASE_ATP"/>
    <property type="match status" value="1"/>
</dbReference>
<dbReference type="PROSITE" id="PS50011">
    <property type="entry name" value="PROTEIN_KINASE_DOM"/>
    <property type="match status" value="1"/>
</dbReference>
<dbReference type="PROSITE" id="PS00108">
    <property type="entry name" value="PROTEIN_KINASE_ST"/>
    <property type="match status" value="1"/>
</dbReference>
<comment type="function">
    <molecule>Isoform 1</molecule>
    <text evidence="2 7">Casein kinases are operationally defined by their preferential utilization of acidic proteins such as caseins as substrates. Can phosphorylate a large number of proteins (PubMed:15893604). Central component of the circadian clock. May act as a negative regulator of circadian rhythmicity by phosphorylating per1 and per2, which may lead to their degradation. Participates in wnt signaling (By similarity).</text>
</comment>
<comment type="function">
    <molecule>Isoform 2</molecule>
    <text evidence="7">Has no kinase activity.</text>
</comment>
<comment type="catalytic activity">
    <reaction evidence="7">
        <text>L-seryl-[protein] + ATP = O-phospho-L-seryl-[protein] + ADP + H(+)</text>
        <dbReference type="Rhea" id="RHEA:17989"/>
        <dbReference type="Rhea" id="RHEA-COMP:9863"/>
        <dbReference type="Rhea" id="RHEA-COMP:11604"/>
        <dbReference type="ChEBI" id="CHEBI:15378"/>
        <dbReference type="ChEBI" id="CHEBI:29999"/>
        <dbReference type="ChEBI" id="CHEBI:30616"/>
        <dbReference type="ChEBI" id="CHEBI:83421"/>
        <dbReference type="ChEBI" id="CHEBI:456216"/>
        <dbReference type="EC" id="2.7.11.1"/>
    </reaction>
    <physiologicalReaction direction="left-to-right" evidence="11">
        <dbReference type="Rhea" id="RHEA:17990"/>
    </physiologicalReaction>
</comment>
<comment type="catalytic activity">
    <reaction evidence="7">
        <text>L-threonyl-[protein] + ATP = O-phospho-L-threonyl-[protein] + ADP + H(+)</text>
        <dbReference type="Rhea" id="RHEA:46608"/>
        <dbReference type="Rhea" id="RHEA-COMP:11060"/>
        <dbReference type="Rhea" id="RHEA-COMP:11605"/>
        <dbReference type="ChEBI" id="CHEBI:15378"/>
        <dbReference type="ChEBI" id="CHEBI:30013"/>
        <dbReference type="ChEBI" id="CHEBI:30616"/>
        <dbReference type="ChEBI" id="CHEBI:61977"/>
        <dbReference type="ChEBI" id="CHEBI:456216"/>
        <dbReference type="EC" id="2.7.11.1"/>
    </reaction>
    <physiologicalReaction direction="left-to-right" evidence="11">
        <dbReference type="Rhea" id="RHEA:46609"/>
    </physiologicalReaction>
</comment>
<comment type="catalytic activity">
    <reaction evidence="2">
        <text>L-seryl-[tau protein] + ATP = O-phospho-L-seryl-[tau protein] + ADP + H(+)</text>
        <dbReference type="Rhea" id="RHEA:12801"/>
        <dbReference type="Rhea" id="RHEA-COMP:13701"/>
        <dbReference type="Rhea" id="RHEA-COMP:13702"/>
        <dbReference type="ChEBI" id="CHEBI:15378"/>
        <dbReference type="ChEBI" id="CHEBI:29999"/>
        <dbReference type="ChEBI" id="CHEBI:30616"/>
        <dbReference type="ChEBI" id="CHEBI:83421"/>
        <dbReference type="ChEBI" id="CHEBI:456216"/>
        <dbReference type="EC" id="2.7.11.26"/>
    </reaction>
    <physiologicalReaction direction="left-to-right" evidence="2">
        <dbReference type="Rhea" id="RHEA:12802"/>
    </physiologicalReaction>
</comment>
<comment type="catalytic activity">
    <reaction evidence="2">
        <text>L-threonyl-[tau protein] + ATP = O-phospho-L-threonyl-[tau protein] + ADP + H(+)</text>
        <dbReference type="Rhea" id="RHEA:53904"/>
        <dbReference type="Rhea" id="RHEA-COMP:13703"/>
        <dbReference type="Rhea" id="RHEA-COMP:13704"/>
        <dbReference type="ChEBI" id="CHEBI:15378"/>
        <dbReference type="ChEBI" id="CHEBI:30013"/>
        <dbReference type="ChEBI" id="CHEBI:30616"/>
        <dbReference type="ChEBI" id="CHEBI:61977"/>
        <dbReference type="ChEBI" id="CHEBI:456216"/>
        <dbReference type="EC" id="2.7.11.26"/>
    </reaction>
    <physiologicalReaction direction="left-to-right" evidence="2">
        <dbReference type="Rhea" id="RHEA:53905"/>
    </physiologicalReaction>
</comment>
<comment type="activity regulation">
    <text evidence="2">Exhibits substrate-dependent heparin activation.</text>
</comment>
<comment type="subunit">
    <text evidence="2 3">Monomer (By similarity). Interacts with per1 and per2. Component of the circadian core oscillator (By similarity).</text>
</comment>
<comment type="subcellular location">
    <molecule>Isoform 1</molecule>
    <subcellularLocation>
        <location evidence="7">Cytoplasm</location>
    </subcellularLocation>
    <subcellularLocation>
        <location evidence="7">Nucleus</location>
    </subcellularLocation>
</comment>
<comment type="subcellular location">
    <molecule>Isoform 2</molecule>
    <subcellularLocation>
        <location evidence="7">Cytoplasm</location>
    </subcellularLocation>
</comment>
<comment type="alternative products">
    <event type="alternative splicing"/>
    <isoform>
        <id>Q5BP74-1</id>
        <name>1</name>
        <sequence type="displayed"/>
    </isoform>
    <isoform>
        <id>Q5BP74-2</id>
        <name>2</name>
        <sequence type="described" ref="VSP_035782"/>
    </isoform>
</comment>
<comment type="tissue specificity">
    <text evidence="7">Detected in retina photoreceptor cells.</text>
</comment>
<comment type="induction">
    <text evidence="7">Constitutively expressed in retina.</text>
</comment>
<comment type="PTM">
    <text evidence="7">Autophosphorylated on serine and threonine residues.</text>
</comment>
<comment type="similarity">
    <text evidence="10">Belongs to the protein kinase superfamily.</text>
</comment>
<protein>
    <recommendedName>
        <fullName>Casein kinase I isoform delta</fullName>
        <shortName>CKI-delta</shortName>
        <shortName>CKId</shortName>
        <ecNumber evidence="7">2.7.11.1</ecNumber>
    </recommendedName>
    <alternativeName>
        <fullName>Tau-protein kinase CSNK1D</fullName>
        <ecNumber evidence="2">2.7.11.26</ecNumber>
    </alternativeName>
</protein>
<keyword id="KW-0025">Alternative splicing</keyword>
<keyword id="KW-0067">ATP-binding</keyword>
<keyword id="KW-0963">Cytoplasm</keyword>
<keyword id="KW-0418">Kinase</keyword>
<keyword id="KW-0547">Nucleotide-binding</keyword>
<keyword id="KW-0539">Nucleus</keyword>
<keyword id="KW-1185">Reference proteome</keyword>
<keyword id="KW-0723">Serine/threonine-protein kinase</keyword>
<keyword id="KW-0808">Transferase</keyword>
<keyword id="KW-0879">Wnt signaling pathway</keyword>
<feature type="chain" id="PRO_0000354089" description="Casein kinase I isoform delta">
    <location>
        <begin position="1"/>
        <end position="415"/>
    </location>
</feature>
<feature type="domain" description="Protein kinase" evidence="4">
    <location>
        <begin position="9"/>
        <end position="277"/>
    </location>
</feature>
<feature type="region of interest" description="Disordered" evidence="6">
    <location>
        <begin position="301"/>
        <end position="415"/>
    </location>
</feature>
<feature type="region of interest" description="Autoinhibitory" evidence="1">
    <location>
        <begin position="317"/>
        <end position="342"/>
    </location>
</feature>
<feature type="compositionally biased region" description="Basic and acidic residues" evidence="6">
    <location>
        <begin position="301"/>
        <end position="315"/>
    </location>
</feature>
<feature type="compositionally biased region" description="Low complexity" evidence="6">
    <location>
        <begin position="341"/>
        <end position="352"/>
    </location>
</feature>
<feature type="compositionally biased region" description="Polar residues" evidence="6">
    <location>
        <begin position="380"/>
        <end position="415"/>
    </location>
</feature>
<feature type="active site" description="Proton acceptor" evidence="4 5">
    <location>
        <position position="128"/>
    </location>
</feature>
<feature type="binding site" evidence="4">
    <location>
        <begin position="15"/>
        <end position="23"/>
    </location>
    <ligand>
        <name>ATP</name>
        <dbReference type="ChEBI" id="CHEBI:30616"/>
    </ligand>
</feature>
<feature type="binding site" evidence="4">
    <location>
        <position position="38"/>
    </location>
    <ligand>
        <name>ATP</name>
        <dbReference type="ChEBI" id="CHEBI:30616"/>
    </ligand>
</feature>
<feature type="splice variant" id="VSP_035782" description="In isoform 2." evidence="8 9">
    <original>EQSRRDDLESLGYVLMYFNLGSLPWQGLKAATKRQKYERISEKKMSTPIEVLCKGYPS</original>
    <variation>A</variation>
    <location>
        <begin position="189"/>
        <end position="246"/>
    </location>
</feature>
<feature type="sequence conflict" description="In Ref. 1; AAX22003." evidence="10" ref="1">
    <original>K</original>
    <variation>N</variation>
    <location>
        <position position="57"/>
    </location>
</feature>
<accession>Q5BP74</accession>
<accession>Q7ZXL6</accession>
<organism>
    <name type="scientific">Xenopus laevis</name>
    <name type="common">African clawed frog</name>
    <dbReference type="NCBI Taxonomy" id="8355"/>
    <lineage>
        <taxon>Eukaryota</taxon>
        <taxon>Metazoa</taxon>
        <taxon>Chordata</taxon>
        <taxon>Craniata</taxon>
        <taxon>Vertebrata</taxon>
        <taxon>Euteleostomi</taxon>
        <taxon>Amphibia</taxon>
        <taxon>Batrachia</taxon>
        <taxon>Anura</taxon>
        <taxon>Pipoidea</taxon>
        <taxon>Pipidae</taxon>
        <taxon>Xenopodinae</taxon>
        <taxon>Xenopus</taxon>
        <taxon>Xenopus</taxon>
    </lineage>
</organism>
<evidence type="ECO:0000250" key="1"/>
<evidence type="ECO:0000250" key="2">
    <source>
        <dbReference type="UniProtKB" id="P48730"/>
    </source>
</evidence>
<evidence type="ECO:0000250" key="3">
    <source>
        <dbReference type="UniProtKB" id="Q9DC28"/>
    </source>
</evidence>
<evidence type="ECO:0000255" key="4">
    <source>
        <dbReference type="PROSITE-ProRule" id="PRU00159"/>
    </source>
</evidence>
<evidence type="ECO:0000255" key="5">
    <source>
        <dbReference type="PROSITE-ProRule" id="PRU10027"/>
    </source>
</evidence>
<evidence type="ECO:0000256" key="6">
    <source>
        <dbReference type="SAM" id="MobiDB-lite"/>
    </source>
</evidence>
<evidence type="ECO:0000269" key="7">
    <source>
    </source>
</evidence>
<evidence type="ECO:0000303" key="8">
    <source>
    </source>
</evidence>
<evidence type="ECO:0000303" key="9">
    <source ref="2"/>
</evidence>
<evidence type="ECO:0000305" key="10"/>
<evidence type="ECO:0000305" key="11">
    <source>
    </source>
</evidence>
<proteinExistence type="evidence at protein level"/>
<reference key="1">
    <citation type="journal article" date="2005" name="Brain Res. Mol. Brain Res.">
        <title>The circadian clock-containing photoreceptor cells in Xenopus laevis express several isoforms of casein kinase I.</title>
        <authorList>
            <person name="Constance C.M."/>
            <person name="Fan J.-Y."/>
            <person name="Preuss F."/>
            <person name="Green C.B."/>
            <person name="Price J.L."/>
        </authorList>
    </citation>
    <scope>NUCLEOTIDE SEQUENCE [MRNA] (ISOFORMS 1 AND 2)</scope>
    <scope>FUNCTION</scope>
    <scope>PHOSPHORYLATION</scope>
    <scope>SUBCELLULAR LOCATION</scope>
    <scope>TISSUE SPECIFICITY</scope>
    <scope>INDUCTION</scope>
    <scope>CATALYTIC ACTIVITY</scope>
    <source>
        <tissue>Embryo</tissue>
    </source>
</reference>
<reference key="2">
    <citation type="submission" date="2003-01" db="EMBL/GenBank/DDBJ databases">
        <authorList>
            <consortium name="NIH - Xenopus Gene Collection (XGC) project"/>
        </authorList>
    </citation>
    <scope>NUCLEOTIDE SEQUENCE [LARGE SCALE MRNA] (ISOFORM 2)</scope>
    <source>
        <tissue>Embryo</tissue>
    </source>
</reference>
<name>KC1D_XENLA</name>
<sequence>MELRVGNRYRLGRKIGSGSFGDIYLGTDIAASEEVAIKLECVKTKHPQLHIESKIYKMMQGGVGIPTIKWCGAEGDYNVMVMELLGPSLEDLFNFCSRKFSLKTVLLLADQMISRIEYIHSKNFIHRDVKPDNFLMGLGKKGNLVYIIDFGLAKKYRDARTHQHIPYRENKNLTGTARYASINTHLGIEQSRRDDLESLGYVLMYFNLGSLPWQGLKAATKRQKYERISEKKMSTPIEVLCKGYPSEFATYLNFCRSLRFDDKPDYSYLRQLFRNLFHRQGFSYDYVFDWNMLKFGASRAAEDAERERREREERLRHTRNPAVRGLPSTASGRLRGTQEVTPSTPLTPTSHTANTSPRPVSGMERERKVSMRLHRGAPVNVSSSDLTSRQDTSRMSTSQIPSRVTSSGLPSTVHR</sequence>
<gene>
    <name type="primary">csnk1d</name>
</gene>